<protein>
    <recommendedName>
        <fullName evidence="1">Holo-[acyl-carrier-protein] synthase</fullName>
        <shortName evidence="1">Holo-ACP synthase</shortName>
        <ecNumber evidence="1">2.7.8.7</ecNumber>
    </recommendedName>
    <alternativeName>
        <fullName evidence="1">4'-phosphopantetheinyl transferase AcpS</fullName>
    </alternativeName>
</protein>
<dbReference type="EC" id="2.7.8.7" evidence="1"/>
<dbReference type="EMBL" id="CP000362">
    <property type="protein sequence ID" value="ABG31005.1"/>
    <property type="molecule type" value="Genomic_DNA"/>
</dbReference>
<dbReference type="RefSeq" id="WP_011567625.1">
    <property type="nucleotide sequence ID" value="NC_008209.1"/>
</dbReference>
<dbReference type="SMR" id="Q16AI8"/>
<dbReference type="STRING" id="375451.RD1_1364"/>
<dbReference type="KEGG" id="rde:RD1_1364"/>
<dbReference type="eggNOG" id="COG0736">
    <property type="taxonomic scope" value="Bacteria"/>
</dbReference>
<dbReference type="HOGENOM" id="CLU_089696_0_2_5"/>
<dbReference type="OrthoDB" id="517356at2"/>
<dbReference type="Proteomes" id="UP000007029">
    <property type="component" value="Chromosome"/>
</dbReference>
<dbReference type="GO" id="GO:0005737">
    <property type="term" value="C:cytoplasm"/>
    <property type="evidence" value="ECO:0007669"/>
    <property type="project" value="UniProtKB-SubCell"/>
</dbReference>
<dbReference type="GO" id="GO:0008897">
    <property type="term" value="F:holo-[acyl-carrier-protein] synthase activity"/>
    <property type="evidence" value="ECO:0007669"/>
    <property type="project" value="UniProtKB-UniRule"/>
</dbReference>
<dbReference type="GO" id="GO:0000287">
    <property type="term" value="F:magnesium ion binding"/>
    <property type="evidence" value="ECO:0007669"/>
    <property type="project" value="UniProtKB-UniRule"/>
</dbReference>
<dbReference type="GO" id="GO:0006633">
    <property type="term" value="P:fatty acid biosynthetic process"/>
    <property type="evidence" value="ECO:0007669"/>
    <property type="project" value="UniProtKB-UniRule"/>
</dbReference>
<dbReference type="Gene3D" id="3.90.470.20">
    <property type="entry name" value="4'-phosphopantetheinyl transferase domain"/>
    <property type="match status" value="1"/>
</dbReference>
<dbReference type="HAMAP" id="MF_00101">
    <property type="entry name" value="AcpS"/>
    <property type="match status" value="1"/>
</dbReference>
<dbReference type="InterPro" id="IPR008278">
    <property type="entry name" value="4-PPantetheinyl_Trfase_dom"/>
</dbReference>
<dbReference type="InterPro" id="IPR037143">
    <property type="entry name" value="4-PPantetheinyl_Trfase_dom_sf"/>
</dbReference>
<dbReference type="InterPro" id="IPR002582">
    <property type="entry name" value="ACPS"/>
</dbReference>
<dbReference type="InterPro" id="IPR004568">
    <property type="entry name" value="Ppantetheine-prot_Trfase_dom"/>
</dbReference>
<dbReference type="NCBIfam" id="TIGR00516">
    <property type="entry name" value="acpS"/>
    <property type="match status" value="1"/>
</dbReference>
<dbReference type="NCBIfam" id="TIGR00556">
    <property type="entry name" value="pantethn_trn"/>
    <property type="match status" value="1"/>
</dbReference>
<dbReference type="Pfam" id="PF01648">
    <property type="entry name" value="ACPS"/>
    <property type="match status" value="1"/>
</dbReference>
<dbReference type="SUPFAM" id="SSF56214">
    <property type="entry name" value="4'-phosphopantetheinyl transferase"/>
    <property type="match status" value="1"/>
</dbReference>
<feature type="chain" id="PRO_1000008487" description="Holo-[acyl-carrier-protein] synthase">
    <location>
        <begin position="1"/>
        <end position="134"/>
    </location>
</feature>
<feature type="binding site" evidence="1">
    <location>
        <position position="8"/>
    </location>
    <ligand>
        <name>Mg(2+)</name>
        <dbReference type="ChEBI" id="CHEBI:18420"/>
    </ligand>
</feature>
<feature type="binding site" evidence="1">
    <location>
        <position position="57"/>
    </location>
    <ligand>
        <name>Mg(2+)</name>
        <dbReference type="ChEBI" id="CHEBI:18420"/>
    </ligand>
</feature>
<keyword id="KW-0963">Cytoplasm</keyword>
<keyword id="KW-0275">Fatty acid biosynthesis</keyword>
<keyword id="KW-0276">Fatty acid metabolism</keyword>
<keyword id="KW-0444">Lipid biosynthesis</keyword>
<keyword id="KW-0443">Lipid metabolism</keyword>
<keyword id="KW-0460">Magnesium</keyword>
<keyword id="KW-0479">Metal-binding</keyword>
<keyword id="KW-1185">Reference proteome</keyword>
<keyword id="KW-0808">Transferase</keyword>
<name>ACPS_ROSDO</name>
<reference key="1">
    <citation type="journal article" date="2007" name="J. Bacteriol.">
        <title>The complete genome sequence of Roseobacter denitrificans reveals a mixotrophic rather than photosynthetic metabolism.</title>
        <authorList>
            <person name="Swingley W.D."/>
            <person name="Sadekar S."/>
            <person name="Mastrian S.D."/>
            <person name="Matthies H.J."/>
            <person name="Hao J."/>
            <person name="Ramos H."/>
            <person name="Acharya C.R."/>
            <person name="Conrad A.L."/>
            <person name="Taylor H.L."/>
            <person name="Dejesa L.C."/>
            <person name="Shah M.K."/>
            <person name="O'Huallachain M.E."/>
            <person name="Lince M.T."/>
            <person name="Blankenship R.E."/>
            <person name="Beatty J.T."/>
            <person name="Touchman J.W."/>
        </authorList>
    </citation>
    <scope>NUCLEOTIDE SEQUENCE [LARGE SCALE GENOMIC DNA]</scope>
    <source>
        <strain>ATCC 33942 / OCh 114</strain>
    </source>
</reference>
<gene>
    <name evidence="1" type="primary">acpS</name>
    <name type="ordered locus">RD1_1364</name>
</gene>
<sequence>MILGIGTDLANIERIARTLDRFGDRFRNRVFTDIEQVKAERRKDVAGTYAKRWAAKEACSKALGTGLAMGIAWKDMSVTNLKSGQPVMHVTGWAQERLAAMTPPGHEAVIHVTLTDDHPWAQAFVVIEALPLKS</sequence>
<proteinExistence type="inferred from homology"/>
<accession>Q16AI8</accession>
<evidence type="ECO:0000255" key="1">
    <source>
        <dbReference type="HAMAP-Rule" id="MF_00101"/>
    </source>
</evidence>
<comment type="function">
    <text evidence="1">Transfers the 4'-phosphopantetheine moiety from coenzyme A to a Ser of acyl-carrier-protein.</text>
</comment>
<comment type="catalytic activity">
    <reaction evidence="1">
        <text>apo-[ACP] + CoA = holo-[ACP] + adenosine 3',5'-bisphosphate + H(+)</text>
        <dbReference type="Rhea" id="RHEA:12068"/>
        <dbReference type="Rhea" id="RHEA-COMP:9685"/>
        <dbReference type="Rhea" id="RHEA-COMP:9690"/>
        <dbReference type="ChEBI" id="CHEBI:15378"/>
        <dbReference type="ChEBI" id="CHEBI:29999"/>
        <dbReference type="ChEBI" id="CHEBI:57287"/>
        <dbReference type="ChEBI" id="CHEBI:58343"/>
        <dbReference type="ChEBI" id="CHEBI:64479"/>
        <dbReference type="EC" id="2.7.8.7"/>
    </reaction>
</comment>
<comment type="cofactor">
    <cofactor evidence="1">
        <name>Mg(2+)</name>
        <dbReference type="ChEBI" id="CHEBI:18420"/>
    </cofactor>
</comment>
<comment type="subcellular location">
    <subcellularLocation>
        <location evidence="1">Cytoplasm</location>
    </subcellularLocation>
</comment>
<comment type="similarity">
    <text evidence="1">Belongs to the P-Pant transferase superfamily. AcpS family.</text>
</comment>
<organism>
    <name type="scientific">Roseobacter denitrificans (strain ATCC 33942 / OCh 114)</name>
    <name type="common">Erythrobacter sp. (strain OCh 114)</name>
    <name type="synonym">Roseobacter denitrificans</name>
    <dbReference type="NCBI Taxonomy" id="375451"/>
    <lineage>
        <taxon>Bacteria</taxon>
        <taxon>Pseudomonadati</taxon>
        <taxon>Pseudomonadota</taxon>
        <taxon>Alphaproteobacteria</taxon>
        <taxon>Rhodobacterales</taxon>
        <taxon>Roseobacteraceae</taxon>
        <taxon>Roseobacter</taxon>
    </lineage>
</organism>